<organism>
    <name type="scientific">Haemophilus influenzae (strain ATCC 51907 / DSM 11121 / KW20 / Rd)</name>
    <dbReference type="NCBI Taxonomy" id="71421"/>
    <lineage>
        <taxon>Bacteria</taxon>
        <taxon>Pseudomonadati</taxon>
        <taxon>Pseudomonadota</taxon>
        <taxon>Gammaproteobacteria</taxon>
        <taxon>Pasteurellales</taxon>
        <taxon>Pasteurellaceae</taxon>
        <taxon>Haemophilus</taxon>
    </lineage>
</organism>
<comment type="function">
    <text evidence="1">Together with LptE, is involved in the assembly of lipopolysaccharide (LPS) at the surface of the outer membrane.</text>
</comment>
<comment type="subunit">
    <text evidence="1">Component of the lipopolysaccharide transport and assembly complex. Interacts with LptE and LptA.</text>
</comment>
<comment type="subcellular location">
    <subcellularLocation>
        <location evidence="1">Cell outer membrane</location>
    </subcellularLocation>
</comment>
<comment type="similarity">
    <text evidence="1">Belongs to the LptD family.</text>
</comment>
<proteinExistence type="evidence at protein level"/>
<evidence type="ECO:0000255" key="1">
    <source>
        <dbReference type="HAMAP-Rule" id="MF_01411"/>
    </source>
</evidence>
<keyword id="KW-0998">Cell outer membrane</keyword>
<keyword id="KW-0472">Membrane</keyword>
<keyword id="KW-1185">Reference proteome</keyword>
<keyword id="KW-0732">Signal</keyword>
<feature type="signal peptide" evidence="1">
    <location>
        <begin position="1"/>
        <end position="23"/>
    </location>
</feature>
<feature type="chain" id="PRO_0000020281" description="LPS-assembly protein LptD">
    <location>
        <begin position="24"/>
        <end position="782"/>
    </location>
</feature>
<protein>
    <recommendedName>
        <fullName evidence="1">LPS-assembly protein LptD</fullName>
    </recommendedName>
</protein>
<gene>
    <name evidence="1" type="primary">lptD</name>
    <name type="synonym">imp</name>
    <name type="synonym">ostA</name>
    <name type="ordered locus">HI_0730</name>
</gene>
<dbReference type="EMBL" id="L42023">
    <property type="protein sequence ID" value="AAC22389.1"/>
    <property type="molecule type" value="Genomic_DNA"/>
</dbReference>
<dbReference type="PIR" id="G64157">
    <property type="entry name" value="G64157"/>
</dbReference>
<dbReference type="RefSeq" id="NP_438889.1">
    <property type="nucleotide sequence ID" value="NC_000907.1"/>
</dbReference>
<dbReference type="SMR" id="P44846"/>
<dbReference type="STRING" id="71421.HI_0730"/>
<dbReference type="EnsemblBacteria" id="AAC22389">
    <property type="protein sequence ID" value="AAC22389"/>
    <property type="gene ID" value="HI_0730"/>
</dbReference>
<dbReference type="KEGG" id="hin:HI_0730"/>
<dbReference type="PATRIC" id="fig|71421.8.peg.764"/>
<dbReference type="eggNOG" id="COG1452">
    <property type="taxonomic scope" value="Bacteria"/>
</dbReference>
<dbReference type="HOGENOM" id="CLU_009039_2_0_6"/>
<dbReference type="OrthoDB" id="9760225at2"/>
<dbReference type="PhylomeDB" id="P44846"/>
<dbReference type="BioCyc" id="HINF71421:G1GJ1-770-MONOMER"/>
<dbReference type="Proteomes" id="UP000000579">
    <property type="component" value="Chromosome"/>
</dbReference>
<dbReference type="GO" id="GO:0009279">
    <property type="term" value="C:cell outer membrane"/>
    <property type="evidence" value="ECO:0000318"/>
    <property type="project" value="GO_Central"/>
</dbReference>
<dbReference type="GO" id="GO:1990351">
    <property type="term" value="C:transporter complex"/>
    <property type="evidence" value="ECO:0000318"/>
    <property type="project" value="GO_Central"/>
</dbReference>
<dbReference type="GO" id="GO:0043165">
    <property type="term" value="P:Gram-negative-bacterium-type cell outer membrane assembly"/>
    <property type="evidence" value="ECO:0007669"/>
    <property type="project" value="UniProtKB-UniRule"/>
</dbReference>
<dbReference type="GO" id="GO:0015920">
    <property type="term" value="P:lipopolysaccharide transport"/>
    <property type="evidence" value="ECO:0007669"/>
    <property type="project" value="InterPro"/>
</dbReference>
<dbReference type="Gene3D" id="2.60.450.10">
    <property type="entry name" value="Lipopolysaccharide (LPS) transport protein A like domain"/>
    <property type="match status" value="1"/>
</dbReference>
<dbReference type="HAMAP" id="MF_01411">
    <property type="entry name" value="LPS_assembly_LptD"/>
    <property type="match status" value="1"/>
</dbReference>
<dbReference type="InterPro" id="IPR020889">
    <property type="entry name" value="LipoPS_assembly_LptD"/>
</dbReference>
<dbReference type="InterPro" id="IPR050218">
    <property type="entry name" value="LptD"/>
</dbReference>
<dbReference type="InterPro" id="IPR007543">
    <property type="entry name" value="LptD_C"/>
</dbReference>
<dbReference type="InterPro" id="IPR005653">
    <property type="entry name" value="OstA-like_N"/>
</dbReference>
<dbReference type="NCBIfam" id="NF002997">
    <property type="entry name" value="PRK03761.1"/>
    <property type="match status" value="1"/>
</dbReference>
<dbReference type="PANTHER" id="PTHR30189">
    <property type="entry name" value="LPS-ASSEMBLY PROTEIN"/>
    <property type="match status" value="1"/>
</dbReference>
<dbReference type="PANTHER" id="PTHR30189:SF1">
    <property type="entry name" value="LPS-ASSEMBLY PROTEIN LPTD"/>
    <property type="match status" value="1"/>
</dbReference>
<dbReference type="Pfam" id="PF04453">
    <property type="entry name" value="LptD"/>
    <property type="match status" value="1"/>
</dbReference>
<dbReference type="Pfam" id="PF03968">
    <property type="entry name" value="LptD_N"/>
    <property type="match status" value="1"/>
</dbReference>
<accession>P44846</accession>
<reference key="1">
    <citation type="journal article" date="1995" name="Science">
        <title>Whole-genome random sequencing and assembly of Haemophilus influenzae Rd.</title>
        <authorList>
            <person name="Fleischmann R.D."/>
            <person name="Adams M.D."/>
            <person name="White O."/>
            <person name="Clayton R.A."/>
            <person name="Kirkness E.F."/>
            <person name="Kerlavage A.R."/>
            <person name="Bult C.J."/>
            <person name="Tomb J.-F."/>
            <person name="Dougherty B.A."/>
            <person name="Merrick J.M."/>
            <person name="McKenney K."/>
            <person name="Sutton G.G."/>
            <person name="FitzHugh W."/>
            <person name="Fields C.A."/>
            <person name="Gocayne J.D."/>
            <person name="Scott J.D."/>
            <person name="Shirley R."/>
            <person name="Liu L.-I."/>
            <person name="Glodek A."/>
            <person name="Kelley J.M."/>
            <person name="Weidman J.F."/>
            <person name="Phillips C.A."/>
            <person name="Spriggs T."/>
            <person name="Hedblom E."/>
            <person name="Cotton M.D."/>
            <person name="Utterback T.R."/>
            <person name="Hanna M.C."/>
            <person name="Nguyen D.T."/>
            <person name="Saudek D.M."/>
            <person name="Brandon R.C."/>
            <person name="Fine L.D."/>
            <person name="Fritchman J.L."/>
            <person name="Fuhrmann J.L."/>
            <person name="Geoghagen N.S.M."/>
            <person name="Gnehm C.L."/>
            <person name="McDonald L.A."/>
            <person name="Small K.V."/>
            <person name="Fraser C.M."/>
            <person name="Smith H.O."/>
            <person name="Venter J.C."/>
        </authorList>
    </citation>
    <scope>NUCLEOTIDE SEQUENCE [LARGE SCALE GENOMIC DNA]</scope>
    <source>
        <strain>ATCC 51907 / DSM 11121 / KW20 / Rd</strain>
    </source>
</reference>
<reference key="2">
    <citation type="journal article" date="2000" name="Electrophoresis">
        <title>Two-dimensional map of the proteome of Haemophilus influenzae.</title>
        <authorList>
            <person name="Langen H."/>
            <person name="Takacs B."/>
            <person name="Evers S."/>
            <person name="Berndt P."/>
            <person name="Lahm H.W."/>
            <person name="Wipf B."/>
            <person name="Gray C."/>
            <person name="Fountoulakis M."/>
        </authorList>
    </citation>
    <scope>IDENTIFICATION BY MASS SPECTROMETRY</scope>
    <source>
        <strain>ATCC 51907 / DSM 11121 / KW20 / Rd</strain>
    </source>
</reference>
<sequence>MNKKHTLISLAILTALYSQQSLADLHEQCLMGVPKFSGEVVTGDVNALPVYIEADNAEINQPNDATYQGNVDLKQGNRHLLAQSVQVKQSGNQSTPLRMAYVRNGFDYKDNQINMLGKDAEFNLDSHDGNLTNSEYEFVGRQGRGKADNITLHNNYRVMKNATFTSCLHGDNAWAVDASEIRQYVKEEYAEMWHARFKIHGVPVFYTPYLQLPIGDRRRSGLLIPSAGTSSQDGLWYAQPIYWNIAPNYDLTFTPKYMSRRGWQANGEFRYLTSIGEGKVAGEYLGKVRYSEYASDNRKRHLFYWNHNSSFLQNWRLNINYTRVSDKRYFNDFDSIYGRSTDGYANQYARIAYYQPNYNFSLSAHQFQIFDDIVNIGPYRAVPQLDFNYHKYDLANGWLNFKLHSQAVRFDNDSKLMPTAWRFHAEPSLNSLMSNKYGSLNIETKLYATRYEQKKGSGKNAEDVQKTVNRVIPQFKVDLQSVLARDITFLKEYTQTFEPHVQYLYRPYRNQSNIGSTLNNDYLGFGYDSALVQQDYYSLFRDRRYSGLDRISSANQVTLGGTTRFYDIAGEERFNLSAGQIYYLSNSRIDENPANKTPTSSSAWALESNWKISNKWYWRGSYQFDTHTNSTSLANTSLEYNPEKNNLIQLNYRYANQEYIDQNLGKSANAYQQDIQQVGLVVGWEIANNWAVVGRYYQDLALQKPVEQYLGVQYNSCCWAASVGVKRNVTNHQNQTRNEIVYDNSIGITLELRGLGSNDHQSGIQEMLEKGKLPYIRAFSLD</sequence>
<name>LPTD_HAEIN</name>